<keyword id="KW-0963">Cytoplasm</keyword>
<keyword id="KW-0233">DNA recombination</keyword>
<organism>
    <name type="scientific">Yersinia pestis bv. Antiqua (strain Antiqua)</name>
    <dbReference type="NCBI Taxonomy" id="360102"/>
    <lineage>
        <taxon>Bacteria</taxon>
        <taxon>Pseudomonadati</taxon>
        <taxon>Pseudomonadota</taxon>
        <taxon>Gammaproteobacteria</taxon>
        <taxon>Enterobacterales</taxon>
        <taxon>Yersiniaceae</taxon>
        <taxon>Yersinia</taxon>
    </lineage>
</organism>
<sequence>MLWFKNLMVYRLSREVSLSADEMEKQLSAFSFTPCGSQDMAKTGWVSPMGSHSDALTHTVNGQIVICARKEEKILPSPVIKQELQDKIERLEGEQHRKLKKTEKDSLKDEVLHSLLPRAFSRFNQTFLWIDTVNDLIMVDAASAKRAEDTLALLRKSLGSLPVVPLTLENPIELTLTEWVRSKTLPAGFALMDEAELKAILEDGGVIRCKKQDLFSDEIAVHIEAGKLVTKLALDWQERIQLVLSDDGSLKRLKFADTLRDQNEDIDREDFAQRFDADFILMTSELAALIKNLIEALGGEAQH</sequence>
<protein>
    <recommendedName>
        <fullName evidence="1">Recombination-associated protein RdgC</fullName>
    </recommendedName>
</protein>
<comment type="function">
    <text evidence="1">May be involved in recombination.</text>
</comment>
<comment type="subcellular location">
    <subcellularLocation>
        <location evidence="1">Cytoplasm</location>
        <location evidence="1">Nucleoid</location>
    </subcellularLocation>
</comment>
<comment type="similarity">
    <text evidence="1">Belongs to the RdgC family.</text>
</comment>
<feature type="chain" id="PRO_1000021248" description="Recombination-associated protein RdgC">
    <location>
        <begin position="1"/>
        <end position="303"/>
    </location>
</feature>
<proteinExistence type="inferred from homology"/>
<evidence type="ECO:0000255" key="1">
    <source>
        <dbReference type="HAMAP-Rule" id="MF_00194"/>
    </source>
</evidence>
<name>RDGC_YERPA</name>
<reference key="1">
    <citation type="journal article" date="2006" name="J. Bacteriol.">
        <title>Complete genome sequence of Yersinia pestis strains Antiqua and Nepal516: evidence of gene reduction in an emerging pathogen.</title>
        <authorList>
            <person name="Chain P.S.G."/>
            <person name="Hu P."/>
            <person name="Malfatti S.A."/>
            <person name="Radnedge L."/>
            <person name="Larimer F."/>
            <person name="Vergez L.M."/>
            <person name="Worsham P."/>
            <person name="Chu M.C."/>
            <person name="Andersen G.L."/>
        </authorList>
    </citation>
    <scope>NUCLEOTIDE SEQUENCE [LARGE SCALE GENOMIC DNA]</scope>
    <source>
        <strain>Antiqua</strain>
    </source>
</reference>
<dbReference type="EMBL" id="CP000308">
    <property type="protein sequence ID" value="ABG14667.1"/>
    <property type="molecule type" value="Genomic_DNA"/>
</dbReference>
<dbReference type="RefSeq" id="WP_002208691.1">
    <property type="nucleotide sequence ID" value="NZ_CP009906.1"/>
</dbReference>
<dbReference type="SMR" id="Q1C4F5"/>
<dbReference type="GeneID" id="57975504"/>
<dbReference type="KEGG" id="ypa:YPA_2705"/>
<dbReference type="Proteomes" id="UP000001971">
    <property type="component" value="Chromosome"/>
</dbReference>
<dbReference type="GO" id="GO:0043590">
    <property type="term" value="C:bacterial nucleoid"/>
    <property type="evidence" value="ECO:0007669"/>
    <property type="project" value="TreeGrafter"/>
</dbReference>
<dbReference type="GO" id="GO:0005737">
    <property type="term" value="C:cytoplasm"/>
    <property type="evidence" value="ECO:0007669"/>
    <property type="project" value="UniProtKB-UniRule"/>
</dbReference>
<dbReference type="GO" id="GO:0003690">
    <property type="term" value="F:double-stranded DNA binding"/>
    <property type="evidence" value="ECO:0007669"/>
    <property type="project" value="TreeGrafter"/>
</dbReference>
<dbReference type="GO" id="GO:0006310">
    <property type="term" value="P:DNA recombination"/>
    <property type="evidence" value="ECO:0007669"/>
    <property type="project" value="UniProtKB-UniRule"/>
</dbReference>
<dbReference type="GO" id="GO:0000018">
    <property type="term" value="P:regulation of DNA recombination"/>
    <property type="evidence" value="ECO:0007669"/>
    <property type="project" value="TreeGrafter"/>
</dbReference>
<dbReference type="HAMAP" id="MF_00194">
    <property type="entry name" value="RdgC"/>
    <property type="match status" value="1"/>
</dbReference>
<dbReference type="InterPro" id="IPR007476">
    <property type="entry name" value="RdgC"/>
</dbReference>
<dbReference type="NCBIfam" id="NF001460">
    <property type="entry name" value="PRK00321.1-1"/>
    <property type="match status" value="1"/>
</dbReference>
<dbReference type="NCBIfam" id="NF001462">
    <property type="entry name" value="PRK00321.1-3"/>
    <property type="match status" value="1"/>
</dbReference>
<dbReference type="NCBIfam" id="NF001464">
    <property type="entry name" value="PRK00321.1-5"/>
    <property type="match status" value="1"/>
</dbReference>
<dbReference type="PANTHER" id="PTHR38103">
    <property type="entry name" value="RECOMBINATION-ASSOCIATED PROTEIN RDGC"/>
    <property type="match status" value="1"/>
</dbReference>
<dbReference type="PANTHER" id="PTHR38103:SF1">
    <property type="entry name" value="RECOMBINATION-ASSOCIATED PROTEIN RDGC"/>
    <property type="match status" value="1"/>
</dbReference>
<dbReference type="Pfam" id="PF04381">
    <property type="entry name" value="RdgC"/>
    <property type="match status" value="1"/>
</dbReference>
<accession>Q1C4F5</accession>
<gene>
    <name evidence="1" type="primary">rdgC</name>
    <name type="ordered locus">YPA_2705</name>
</gene>